<dbReference type="EMBL" id="FN393070">
    <property type="protein sequence ID" value="CAY79910.1"/>
    <property type="molecule type" value="Genomic_DNA"/>
</dbReference>
<dbReference type="SMR" id="C8Z944"/>
<dbReference type="HOGENOM" id="CLU_334653_0_0_1"/>
<dbReference type="OrthoDB" id="41177at4893"/>
<dbReference type="Proteomes" id="UP000000286">
    <property type="component" value="Chromosome VII, Scaffold EC1118_1G1"/>
</dbReference>
<dbReference type="GO" id="GO:0005739">
    <property type="term" value="C:mitochondrion"/>
    <property type="evidence" value="ECO:0007669"/>
    <property type="project" value="UniProtKB-SubCell"/>
</dbReference>
<dbReference type="GO" id="GO:0031930">
    <property type="term" value="P:mitochondria-nucleus signaling pathway"/>
    <property type="evidence" value="ECO:0007669"/>
    <property type="project" value="TreeGrafter"/>
</dbReference>
<dbReference type="GO" id="GO:0006397">
    <property type="term" value="P:mRNA processing"/>
    <property type="evidence" value="ECO:0007669"/>
    <property type="project" value="UniProtKB-KW"/>
</dbReference>
<dbReference type="GO" id="GO:0008380">
    <property type="term" value="P:RNA splicing"/>
    <property type="evidence" value="ECO:0007669"/>
    <property type="project" value="UniProtKB-KW"/>
</dbReference>
<dbReference type="Gene3D" id="1.25.40.10">
    <property type="entry name" value="Tetratricopeptide repeat domain"/>
    <property type="match status" value="1"/>
</dbReference>
<dbReference type="InterPro" id="IPR002885">
    <property type="entry name" value="Pentatricopeptide_rpt"/>
</dbReference>
<dbReference type="InterPro" id="IPR011990">
    <property type="entry name" value="TPR-like_helical_dom_sf"/>
</dbReference>
<dbReference type="NCBIfam" id="TIGR00756">
    <property type="entry name" value="PPR"/>
    <property type="match status" value="1"/>
</dbReference>
<dbReference type="PANTHER" id="PTHR47936:SF1">
    <property type="entry name" value="PENTATRICOPEPTIDE REPEAT-CONTAINING PROTEIN GUN1, CHLOROPLASTIC"/>
    <property type="match status" value="1"/>
</dbReference>
<dbReference type="PANTHER" id="PTHR47936">
    <property type="entry name" value="PPR_LONG DOMAIN-CONTAINING PROTEIN"/>
    <property type="match status" value="1"/>
</dbReference>
<dbReference type="Pfam" id="PF13041">
    <property type="entry name" value="PPR_2"/>
    <property type="match status" value="1"/>
</dbReference>
<dbReference type="PROSITE" id="PS51375">
    <property type="entry name" value="PPR"/>
    <property type="match status" value="2"/>
</dbReference>
<gene>
    <name type="primary">CCM1</name>
    <name type="synonym">DMR1</name>
    <name type="synonym">RRG2</name>
    <name type="ORF">EC1118_1G1_4709g</name>
</gene>
<accession>C8Z944</accession>
<organism>
    <name type="scientific">Saccharomyces cerevisiae (strain Lalvin EC1118 / Prise de mousse)</name>
    <name type="common">Baker's yeast</name>
    <dbReference type="NCBI Taxonomy" id="643680"/>
    <lineage>
        <taxon>Eukaryota</taxon>
        <taxon>Fungi</taxon>
        <taxon>Dikarya</taxon>
        <taxon>Ascomycota</taxon>
        <taxon>Saccharomycotina</taxon>
        <taxon>Saccharomycetes</taxon>
        <taxon>Saccharomycetales</taxon>
        <taxon>Saccharomycetaceae</taxon>
        <taxon>Saccharomyces</taxon>
    </lineage>
</organism>
<comment type="function">
    <text evidence="1">Regulates mitochondrial small subunit maturation by controlling 15S rRNA 5'-end processing. Localizes to the 5' precursor of the 15S rRNA in a position that is subsequently occupied by mS47 in the mature yeast mtSSU. Uses structure and sequence-specific RNA recognition, binding to a single-stranded region of the precursor and specifically recognizing bases -6 to -1. The exchange of Ccm1 for mS47 is coupled to the irreversible removal of precursor rRNA that is accompanied by conformational changes of the mitoribosomal proteins uS5m and mS26. These conformational changes signal completion of 5'-end rRNA processing through protection of the mature 5'-end of the 15S rRNA and stabilization of mS47. The removal of the 5' precursor together with the dissociation of Ccm1 may be catalyzed by the 5'-3' exoribonuclease Pet127. Involved in the specific removal of group I introns in mitochondrial encoded transcripts.</text>
</comment>
<comment type="subunit">
    <text evidence="1">Binds to mitochondrial small subunit 15S rRNA.</text>
</comment>
<comment type="subcellular location">
    <subcellularLocation>
        <location evidence="1">Mitochondrion</location>
    </subcellularLocation>
</comment>
<comment type="miscellaneous">
    <text evidence="1">Involved in mitochondrial-nuclear incompatibility, a major determinant in reproductive isolation between species, through hybrid incompatibility of Ccm1 and its interacting partner 15S rRNA between yeast species.</text>
</comment>
<comment type="similarity">
    <text evidence="4">Belongs to the CCM1 family.</text>
</comment>
<name>CCM1_YEAS8</name>
<proteinExistence type="inferred from homology"/>
<sequence length="864" mass="101408">MYMARCGPKNNVLCFPFQLSFLFSKRLINKRFKYTLQTEDEKDMMGSLSKNKIITPEDVEFKLAQLREFSNTLKERIHNTKSVNSDGHQSNSIAPISEDSRNVNVTKISSVPNEEKSKNLSDLIHSSFLEKMDHLVPKVIRERVADDDILAKNLFDRSHSNWAPVIDRLYVSEKRFMDIDSREFSVWLNGTVKYLPFHSILHLDEMLLEQINGDVVKFNTHMYECIFNNLGNLKPTNFNQDGTNDKVILKMKELLERYDKALKITEERINKKEGFPCKVPKMTQAILNNCLKYSTKCSSFHDMDYFITKFRDDYGITPNKQNLTTVIQFYSRKEMTKQAWNTFDTMKFLSTKHFPDICTYNTMLRICEKERNFPKALDLFQEIQDHNIKPTTNTYIMMARVLASSSSNAVVSEGKSDSLRLLGWKYLHELEDKNLYRHKKDDLNSFLAMMALAAFDGDIELSRALYYLFIAKKYKTLCANWKGNILVDQDTIWKSTLMPEMLNYLMLAYARFDPRNLPVLSGYEKGIELRRKFLREFDSSMRLDDTDKLVKFKLPFLPISDLNSEAQVLAESNAIWSFNLENGGTRNTLTSSNEAALEDIKKYRQLLDSFAQEAEDFNEFKFKVMYEVTKMQRESINVNVFNKISLHTYLSIPINLKQQKEFLRRLTFFTFQQHEFEAVIKRLYEGYRNIPSSHTRDQNSISTEAISVSKPETTEDLNLIMHDIWYITCLRHKIMMDTTLYELVMKAAIEFQNEDLAKKVWNDRGKFRTTVPFLKMDQRIRIAKDQKFAHLMVEFFTKQGKYSDAIAIILSSKNRFNWTYSMVRNLHKALEEIEDRNSVEILLDVVNKKSHAKALKWEEQELNM</sequence>
<protein>
    <recommendedName>
        <fullName>Mitochondrial 15S rRNA processing factor CCM1</fullName>
    </recommendedName>
    <alternativeName>
        <fullName>COB and COX1 mRNA maturation protein 1</fullName>
    </alternativeName>
    <alternativeName>
        <fullName>Degradation of mitochondrial rRNA protein 1</fullName>
    </alternativeName>
    <alternativeName>
        <fullName>Required for respiratory growth protein 2</fullName>
    </alternativeName>
</protein>
<evidence type="ECO:0000250" key="1">
    <source>
        <dbReference type="UniProtKB" id="P48237"/>
    </source>
</evidence>
<evidence type="ECO:0000255" key="2"/>
<evidence type="ECO:0000255" key="3">
    <source>
        <dbReference type="PROSITE-ProRule" id="PRU00708"/>
    </source>
</evidence>
<evidence type="ECO:0000305" key="4"/>
<keyword id="KW-0496">Mitochondrion</keyword>
<keyword id="KW-0507">mRNA processing</keyword>
<keyword id="KW-0508">mRNA splicing</keyword>
<keyword id="KW-0677">Repeat</keyword>
<keyword id="KW-0809">Transit peptide</keyword>
<feature type="transit peptide" description="Mitochondrion" evidence="2">
    <location>
        <begin position="1"/>
        <end position="76"/>
    </location>
</feature>
<feature type="chain" id="PRO_0000402274" description="Mitochondrial 15S rRNA processing factor CCM1" evidence="2">
    <location>
        <begin position="77"/>
        <end position="864"/>
    </location>
</feature>
<feature type="repeat" description="PPR 1" evidence="3">
    <location>
        <begin position="319"/>
        <end position="353"/>
    </location>
</feature>
<feature type="repeat" description="PPR 2" evidence="3">
    <location>
        <begin position="356"/>
        <end position="390"/>
    </location>
</feature>
<reference key="1">
    <citation type="journal article" date="2009" name="Proc. Natl. Acad. Sci. U.S.A.">
        <title>Eukaryote-to-eukaryote gene transfer events revealed by the genome sequence of the wine yeast Saccharomyces cerevisiae EC1118.</title>
        <authorList>
            <person name="Novo M."/>
            <person name="Bigey F."/>
            <person name="Beyne E."/>
            <person name="Galeote V."/>
            <person name="Gavory F."/>
            <person name="Mallet S."/>
            <person name="Cambon B."/>
            <person name="Legras J.-L."/>
            <person name="Wincker P."/>
            <person name="Casaregola S."/>
            <person name="Dequin S."/>
        </authorList>
    </citation>
    <scope>NUCLEOTIDE SEQUENCE [LARGE SCALE GENOMIC DNA]</scope>
    <source>
        <strain>Lalvin EC1118 / Prise de mousse</strain>
    </source>
</reference>